<dbReference type="EC" id="2.1.1.192" evidence="1"/>
<dbReference type="EMBL" id="BA000037">
    <property type="protein sequence ID" value="BAC93528.1"/>
    <property type="molecule type" value="Genomic_DNA"/>
</dbReference>
<dbReference type="RefSeq" id="WP_011149605.1">
    <property type="nucleotide sequence ID" value="NC_005139.1"/>
</dbReference>
<dbReference type="SMR" id="Q7MNF3"/>
<dbReference type="STRING" id="672.VV93_v1c07100"/>
<dbReference type="KEGG" id="vvy:VV0764"/>
<dbReference type="PATRIC" id="fig|196600.6.peg.779"/>
<dbReference type="eggNOG" id="COG0820">
    <property type="taxonomic scope" value="Bacteria"/>
</dbReference>
<dbReference type="HOGENOM" id="CLU_029101_0_0_6"/>
<dbReference type="Proteomes" id="UP000002675">
    <property type="component" value="Chromosome I"/>
</dbReference>
<dbReference type="GO" id="GO:0005737">
    <property type="term" value="C:cytoplasm"/>
    <property type="evidence" value="ECO:0007669"/>
    <property type="project" value="UniProtKB-SubCell"/>
</dbReference>
<dbReference type="GO" id="GO:0051539">
    <property type="term" value="F:4 iron, 4 sulfur cluster binding"/>
    <property type="evidence" value="ECO:0007669"/>
    <property type="project" value="UniProtKB-UniRule"/>
</dbReference>
<dbReference type="GO" id="GO:0046872">
    <property type="term" value="F:metal ion binding"/>
    <property type="evidence" value="ECO:0007669"/>
    <property type="project" value="UniProtKB-KW"/>
</dbReference>
<dbReference type="GO" id="GO:0070040">
    <property type="term" value="F:rRNA (adenine(2503)-C2-)-methyltransferase activity"/>
    <property type="evidence" value="ECO:0007669"/>
    <property type="project" value="UniProtKB-UniRule"/>
</dbReference>
<dbReference type="GO" id="GO:0019843">
    <property type="term" value="F:rRNA binding"/>
    <property type="evidence" value="ECO:0007669"/>
    <property type="project" value="UniProtKB-UniRule"/>
</dbReference>
<dbReference type="GO" id="GO:0002935">
    <property type="term" value="F:tRNA (adenine(37)-C2)-methyltransferase activity"/>
    <property type="evidence" value="ECO:0007669"/>
    <property type="project" value="UniProtKB-UniRule"/>
</dbReference>
<dbReference type="GO" id="GO:0000049">
    <property type="term" value="F:tRNA binding"/>
    <property type="evidence" value="ECO:0007669"/>
    <property type="project" value="UniProtKB-UniRule"/>
</dbReference>
<dbReference type="GO" id="GO:0070475">
    <property type="term" value="P:rRNA base methylation"/>
    <property type="evidence" value="ECO:0007669"/>
    <property type="project" value="UniProtKB-UniRule"/>
</dbReference>
<dbReference type="GO" id="GO:0030488">
    <property type="term" value="P:tRNA methylation"/>
    <property type="evidence" value="ECO:0007669"/>
    <property type="project" value="UniProtKB-UniRule"/>
</dbReference>
<dbReference type="CDD" id="cd01335">
    <property type="entry name" value="Radical_SAM"/>
    <property type="match status" value="1"/>
</dbReference>
<dbReference type="FunFam" id="1.10.150.530:FF:000003">
    <property type="entry name" value="Dual-specificity RNA methyltransferase RlmN"/>
    <property type="match status" value="1"/>
</dbReference>
<dbReference type="FunFam" id="3.20.20.70:FF:000008">
    <property type="entry name" value="Dual-specificity RNA methyltransferase RlmN"/>
    <property type="match status" value="1"/>
</dbReference>
<dbReference type="Gene3D" id="1.10.150.530">
    <property type="match status" value="1"/>
</dbReference>
<dbReference type="Gene3D" id="3.20.20.70">
    <property type="entry name" value="Aldolase class I"/>
    <property type="match status" value="1"/>
</dbReference>
<dbReference type="HAMAP" id="MF_01849">
    <property type="entry name" value="RNA_methyltr_RlmN"/>
    <property type="match status" value="1"/>
</dbReference>
<dbReference type="InterPro" id="IPR013785">
    <property type="entry name" value="Aldolase_TIM"/>
</dbReference>
<dbReference type="InterPro" id="IPR040072">
    <property type="entry name" value="Methyltransferase_A"/>
</dbReference>
<dbReference type="InterPro" id="IPR048641">
    <property type="entry name" value="RlmN_N"/>
</dbReference>
<dbReference type="InterPro" id="IPR027492">
    <property type="entry name" value="RNA_MTrfase_RlmN"/>
</dbReference>
<dbReference type="InterPro" id="IPR004383">
    <property type="entry name" value="rRNA_lsu_MTrfase_RlmN/Cfr"/>
</dbReference>
<dbReference type="InterPro" id="IPR007197">
    <property type="entry name" value="rSAM"/>
</dbReference>
<dbReference type="NCBIfam" id="NF008396">
    <property type="entry name" value="PRK11194.1"/>
    <property type="match status" value="1"/>
</dbReference>
<dbReference type="NCBIfam" id="TIGR00048">
    <property type="entry name" value="rRNA_mod_RlmN"/>
    <property type="match status" value="1"/>
</dbReference>
<dbReference type="PANTHER" id="PTHR30544">
    <property type="entry name" value="23S RRNA METHYLTRANSFERASE"/>
    <property type="match status" value="1"/>
</dbReference>
<dbReference type="PANTHER" id="PTHR30544:SF5">
    <property type="entry name" value="RADICAL SAM CORE DOMAIN-CONTAINING PROTEIN"/>
    <property type="match status" value="1"/>
</dbReference>
<dbReference type="Pfam" id="PF04055">
    <property type="entry name" value="Radical_SAM"/>
    <property type="match status" value="1"/>
</dbReference>
<dbReference type="Pfam" id="PF21016">
    <property type="entry name" value="RlmN_N"/>
    <property type="match status" value="1"/>
</dbReference>
<dbReference type="PIRSF" id="PIRSF006004">
    <property type="entry name" value="CHP00048"/>
    <property type="match status" value="1"/>
</dbReference>
<dbReference type="SFLD" id="SFLDF00275">
    <property type="entry name" value="adenosine_C2_methyltransferase"/>
    <property type="match status" value="1"/>
</dbReference>
<dbReference type="SFLD" id="SFLDS00029">
    <property type="entry name" value="Radical_SAM"/>
    <property type="match status" value="1"/>
</dbReference>
<dbReference type="SUPFAM" id="SSF102114">
    <property type="entry name" value="Radical SAM enzymes"/>
    <property type="match status" value="1"/>
</dbReference>
<dbReference type="PROSITE" id="PS51918">
    <property type="entry name" value="RADICAL_SAM"/>
    <property type="match status" value="1"/>
</dbReference>
<accession>Q7MNF3</accession>
<reference key="1">
    <citation type="journal article" date="2003" name="Genome Res.">
        <title>Comparative genome analysis of Vibrio vulnificus, a marine pathogen.</title>
        <authorList>
            <person name="Chen C.-Y."/>
            <person name="Wu K.-M."/>
            <person name="Chang Y.-C."/>
            <person name="Chang C.-H."/>
            <person name="Tsai H.-C."/>
            <person name="Liao T.-L."/>
            <person name="Liu Y.-M."/>
            <person name="Chen H.-J."/>
            <person name="Shen A.B.-T."/>
            <person name="Li J.-C."/>
            <person name="Su T.-L."/>
            <person name="Shao C.-P."/>
            <person name="Lee C.-T."/>
            <person name="Hor L.-I."/>
            <person name="Tsai S.-F."/>
        </authorList>
    </citation>
    <scope>NUCLEOTIDE SEQUENCE [LARGE SCALE GENOMIC DNA]</scope>
    <source>
        <strain>YJ016</strain>
    </source>
</reference>
<name>RLMN_VIBVY</name>
<evidence type="ECO:0000255" key="1">
    <source>
        <dbReference type="HAMAP-Rule" id="MF_01849"/>
    </source>
</evidence>
<evidence type="ECO:0000255" key="2">
    <source>
        <dbReference type="PROSITE-ProRule" id="PRU01266"/>
    </source>
</evidence>
<feature type="chain" id="PRO_0000350521" description="Dual-specificity RNA methyltransferase RlmN">
    <location>
        <begin position="1"/>
        <end position="374"/>
    </location>
</feature>
<feature type="domain" description="Radical SAM core" evidence="2">
    <location>
        <begin position="100"/>
        <end position="339"/>
    </location>
</feature>
<feature type="active site" description="Proton acceptor" evidence="1">
    <location>
        <position position="94"/>
    </location>
</feature>
<feature type="active site" description="S-methylcysteine intermediate" evidence="1">
    <location>
        <position position="344"/>
    </location>
</feature>
<feature type="binding site" evidence="1">
    <location>
        <position position="114"/>
    </location>
    <ligand>
        <name>[4Fe-4S] cluster</name>
        <dbReference type="ChEBI" id="CHEBI:49883"/>
        <note>4Fe-4S-S-AdoMet</note>
    </ligand>
</feature>
<feature type="binding site" evidence="1">
    <location>
        <position position="118"/>
    </location>
    <ligand>
        <name>[4Fe-4S] cluster</name>
        <dbReference type="ChEBI" id="CHEBI:49883"/>
        <note>4Fe-4S-S-AdoMet</note>
    </ligand>
</feature>
<feature type="binding site" evidence="1">
    <location>
        <position position="121"/>
    </location>
    <ligand>
        <name>[4Fe-4S] cluster</name>
        <dbReference type="ChEBI" id="CHEBI:49883"/>
        <note>4Fe-4S-S-AdoMet</note>
    </ligand>
</feature>
<feature type="binding site" evidence="1">
    <location>
        <begin position="168"/>
        <end position="169"/>
    </location>
    <ligand>
        <name>S-adenosyl-L-methionine</name>
        <dbReference type="ChEBI" id="CHEBI:59789"/>
    </ligand>
</feature>
<feature type="binding site" evidence="1">
    <location>
        <position position="200"/>
    </location>
    <ligand>
        <name>S-adenosyl-L-methionine</name>
        <dbReference type="ChEBI" id="CHEBI:59789"/>
    </ligand>
</feature>
<feature type="binding site" evidence="1">
    <location>
        <begin position="222"/>
        <end position="224"/>
    </location>
    <ligand>
        <name>S-adenosyl-L-methionine</name>
        <dbReference type="ChEBI" id="CHEBI:59789"/>
    </ligand>
</feature>
<feature type="binding site" evidence="1">
    <location>
        <position position="301"/>
    </location>
    <ligand>
        <name>S-adenosyl-L-methionine</name>
        <dbReference type="ChEBI" id="CHEBI:59789"/>
    </ligand>
</feature>
<feature type="disulfide bond" description="(transient)" evidence="1">
    <location>
        <begin position="107"/>
        <end position="344"/>
    </location>
</feature>
<gene>
    <name evidence="1" type="primary">rlmN</name>
    <name type="ordered locus">VV0764</name>
</gene>
<proteinExistence type="inferred from homology"/>
<comment type="function">
    <text evidence="1">Specifically methylates position 2 of adenine 2503 in 23S rRNA and position 2 of adenine 37 in tRNAs. m2A2503 modification seems to play a crucial role in the proofreading step occurring at the peptidyl transferase center and thus would serve to optimize ribosomal fidelity.</text>
</comment>
<comment type="catalytic activity">
    <reaction evidence="1">
        <text>adenosine(2503) in 23S rRNA + 2 reduced [2Fe-2S]-[ferredoxin] + 2 S-adenosyl-L-methionine = 2-methyladenosine(2503) in 23S rRNA + 5'-deoxyadenosine + L-methionine + 2 oxidized [2Fe-2S]-[ferredoxin] + S-adenosyl-L-homocysteine</text>
        <dbReference type="Rhea" id="RHEA:42916"/>
        <dbReference type="Rhea" id="RHEA-COMP:10000"/>
        <dbReference type="Rhea" id="RHEA-COMP:10001"/>
        <dbReference type="Rhea" id="RHEA-COMP:10152"/>
        <dbReference type="Rhea" id="RHEA-COMP:10282"/>
        <dbReference type="ChEBI" id="CHEBI:17319"/>
        <dbReference type="ChEBI" id="CHEBI:33737"/>
        <dbReference type="ChEBI" id="CHEBI:33738"/>
        <dbReference type="ChEBI" id="CHEBI:57844"/>
        <dbReference type="ChEBI" id="CHEBI:57856"/>
        <dbReference type="ChEBI" id="CHEBI:59789"/>
        <dbReference type="ChEBI" id="CHEBI:74411"/>
        <dbReference type="ChEBI" id="CHEBI:74497"/>
        <dbReference type="EC" id="2.1.1.192"/>
    </reaction>
</comment>
<comment type="catalytic activity">
    <reaction evidence="1">
        <text>adenosine(37) in tRNA + 2 reduced [2Fe-2S]-[ferredoxin] + 2 S-adenosyl-L-methionine = 2-methyladenosine(37) in tRNA + 5'-deoxyadenosine + L-methionine + 2 oxidized [2Fe-2S]-[ferredoxin] + S-adenosyl-L-homocysteine</text>
        <dbReference type="Rhea" id="RHEA:43332"/>
        <dbReference type="Rhea" id="RHEA-COMP:10000"/>
        <dbReference type="Rhea" id="RHEA-COMP:10001"/>
        <dbReference type="Rhea" id="RHEA-COMP:10162"/>
        <dbReference type="Rhea" id="RHEA-COMP:10485"/>
        <dbReference type="ChEBI" id="CHEBI:17319"/>
        <dbReference type="ChEBI" id="CHEBI:33737"/>
        <dbReference type="ChEBI" id="CHEBI:33738"/>
        <dbReference type="ChEBI" id="CHEBI:57844"/>
        <dbReference type="ChEBI" id="CHEBI:57856"/>
        <dbReference type="ChEBI" id="CHEBI:59789"/>
        <dbReference type="ChEBI" id="CHEBI:74411"/>
        <dbReference type="ChEBI" id="CHEBI:74497"/>
        <dbReference type="EC" id="2.1.1.192"/>
    </reaction>
</comment>
<comment type="cofactor">
    <cofactor evidence="1">
        <name>[4Fe-4S] cluster</name>
        <dbReference type="ChEBI" id="CHEBI:49883"/>
    </cofactor>
    <text evidence="1">Binds 1 [4Fe-4S] cluster. The cluster is coordinated with 3 cysteines and an exchangeable S-adenosyl-L-methionine.</text>
</comment>
<comment type="subcellular location">
    <subcellularLocation>
        <location evidence="1">Cytoplasm</location>
    </subcellularLocation>
</comment>
<comment type="miscellaneous">
    <text evidence="1">Reaction proceeds by a ping-pong mechanism involving intermediate methylation of a conserved cysteine residue.</text>
</comment>
<comment type="similarity">
    <text evidence="1">Belongs to the radical SAM superfamily. RlmN family.</text>
</comment>
<keyword id="KW-0004">4Fe-4S</keyword>
<keyword id="KW-0963">Cytoplasm</keyword>
<keyword id="KW-1015">Disulfide bond</keyword>
<keyword id="KW-0408">Iron</keyword>
<keyword id="KW-0411">Iron-sulfur</keyword>
<keyword id="KW-0479">Metal-binding</keyword>
<keyword id="KW-0489">Methyltransferase</keyword>
<keyword id="KW-0698">rRNA processing</keyword>
<keyword id="KW-0949">S-adenosyl-L-methionine</keyword>
<keyword id="KW-0808">Transferase</keyword>
<keyword id="KW-0819">tRNA processing</keyword>
<organism>
    <name type="scientific">Vibrio vulnificus (strain YJ016)</name>
    <dbReference type="NCBI Taxonomy" id="196600"/>
    <lineage>
        <taxon>Bacteria</taxon>
        <taxon>Pseudomonadati</taxon>
        <taxon>Pseudomonadota</taxon>
        <taxon>Gammaproteobacteria</taxon>
        <taxon>Vibrionales</taxon>
        <taxon>Vibrionaceae</taxon>
        <taxon>Vibrio</taxon>
    </lineage>
</organism>
<sequence length="374" mass="42004">MSTEKINLLDFDRKGLRELFAQELGEKAFRADQVMKWIYHFGVDDFDNMTNINKQLREKLKQKCEIVAPVVSEAQHSSDGTIKWAMRVGDQDVETVYIPEEDRATLCVSSQVGCALECKFCSTAQQGFNRNLKVSEIIGQVWRAAREVGLEKETGRRPITNVVMMGMGEPLLNMKNLIPALEIMLDDLGFGLSKRRVTVSTSGVVSGLDQMTGKIDVALAISLHAPNDKLRSEIMPINDRWDIQDFLASVRRYIASSNANRGKVTVEYVLLDHVNDGTEHAHELAQLMKDTPCKINLIPFNPYPGSPYKKPSNSRIDRFQKTLMQYEHTVTIRKTRGDDIDAACGQLVGDVIDRTKRTAMLKAAKGETIEVKAL</sequence>
<protein>
    <recommendedName>
        <fullName evidence="1">Dual-specificity RNA methyltransferase RlmN</fullName>
        <ecNumber evidence="1">2.1.1.192</ecNumber>
    </recommendedName>
    <alternativeName>
        <fullName evidence="1">23S rRNA (adenine(2503)-C(2))-methyltransferase</fullName>
    </alternativeName>
    <alternativeName>
        <fullName evidence="1">23S rRNA m2A2503 methyltransferase</fullName>
    </alternativeName>
    <alternativeName>
        <fullName evidence="1">Ribosomal RNA large subunit methyltransferase N</fullName>
    </alternativeName>
    <alternativeName>
        <fullName evidence="1">tRNA (adenine(37)-C(2))-methyltransferase</fullName>
    </alternativeName>
    <alternativeName>
        <fullName evidence="1">tRNA m2A37 methyltransferase</fullName>
    </alternativeName>
</protein>